<evidence type="ECO:0000255" key="1">
    <source>
        <dbReference type="HAMAP-Rule" id="MF_01038"/>
    </source>
</evidence>
<gene>
    <name evidence="1" type="primary">gpmI</name>
    <name type="ordered locus">EcE24377A_4116</name>
</gene>
<keyword id="KW-0324">Glycolysis</keyword>
<keyword id="KW-0413">Isomerase</keyword>
<keyword id="KW-0464">Manganese</keyword>
<keyword id="KW-0479">Metal-binding</keyword>
<keyword id="KW-1185">Reference proteome</keyword>
<dbReference type="EC" id="5.4.2.12" evidence="1"/>
<dbReference type="EMBL" id="CP000800">
    <property type="protein sequence ID" value="ABV17450.1"/>
    <property type="molecule type" value="Genomic_DNA"/>
</dbReference>
<dbReference type="SMR" id="A7ZTG6"/>
<dbReference type="KEGG" id="ecw:EcE24377A_4116"/>
<dbReference type="HOGENOM" id="CLU_026099_2_0_6"/>
<dbReference type="UniPathway" id="UPA00109">
    <property type="reaction ID" value="UER00186"/>
</dbReference>
<dbReference type="Proteomes" id="UP000001122">
    <property type="component" value="Chromosome"/>
</dbReference>
<dbReference type="GO" id="GO:0005829">
    <property type="term" value="C:cytosol"/>
    <property type="evidence" value="ECO:0007669"/>
    <property type="project" value="TreeGrafter"/>
</dbReference>
<dbReference type="GO" id="GO:0030145">
    <property type="term" value="F:manganese ion binding"/>
    <property type="evidence" value="ECO:0007669"/>
    <property type="project" value="UniProtKB-UniRule"/>
</dbReference>
<dbReference type="GO" id="GO:0004619">
    <property type="term" value="F:phosphoglycerate mutase activity"/>
    <property type="evidence" value="ECO:0007669"/>
    <property type="project" value="UniProtKB-EC"/>
</dbReference>
<dbReference type="GO" id="GO:0006007">
    <property type="term" value="P:glucose catabolic process"/>
    <property type="evidence" value="ECO:0007669"/>
    <property type="project" value="InterPro"/>
</dbReference>
<dbReference type="GO" id="GO:0006096">
    <property type="term" value="P:glycolytic process"/>
    <property type="evidence" value="ECO:0007669"/>
    <property type="project" value="UniProtKB-UniRule"/>
</dbReference>
<dbReference type="CDD" id="cd16010">
    <property type="entry name" value="iPGM"/>
    <property type="match status" value="1"/>
</dbReference>
<dbReference type="FunFam" id="3.40.1450.10:FF:000001">
    <property type="entry name" value="2,3-bisphosphoglycerate-independent phosphoglycerate mutase"/>
    <property type="match status" value="1"/>
</dbReference>
<dbReference type="FunFam" id="3.40.720.10:FF:000001">
    <property type="entry name" value="2,3-bisphosphoglycerate-independent phosphoglycerate mutase"/>
    <property type="match status" value="1"/>
</dbReference>
<dbReference type="Gene3D" id="3.40.720.10">
    <property type="entry name" value="Alkaline Phosphatase, subunit A"/>
    <property type="match status" value="1"/>
</dbReference>
<dbReference type="Gene3D" id="3.40.1450.10">
    <property type="entry name" value="BPG-independent phosphoglycerate mutase, domain B"/>
    <property type="match status" value="1"/>
</dbReference>
<dbReference type="HAMAP" id="MF_01038">
    <property type="entry name" value="GpmI"/>
    <property type="match status" value="1"/>
</dbReference>
<dbReference type="InterPro" id="IPR017850">
    <property type="entry name" value="Alkaline_phosphatase_core_sf"/>
</dbReference>
<dbReference type="InterPro" id="IPR011258">
    <property type="entry name" value="BPG-indep_PGM_N"/>
</dbReference>
<dbReference type="InterPro" id="IPR006124">
    <property type="entry name" value="Metalloenzyme"/>
</dbReference>
<dbReference type="InterPro" id="IPR036646">
    <property type="entry name" value="PGAM_B_sf"/>
</dbReference>
<dbReference type="InterPro" id="IPR005995">
    <property type="entry name" value="Pgm_bpd_ind"/>
</dbReference>
<dbReference type="NCBIfam" id="TIGR01307">
    <property type="entry name" value="pgm_bpd_ind"/>
    <property type="match status" value="1"/>
</dbReference>
<dbReference type="NCBIfam" id="NF003897">
    <property type="entry name" value="PRK05434.1-5"/>
    <property type="match status" value="1"/>
</dbReference>
<dbReference type="PANTHER" id="PTHR31637">
    <property type="entry name" value="2,3-BISPHOSPHOGLYCERATE-INDEPENDENT PHOSPHOGLYCERATE MUTASE"/>
    <property type="match status" value="1"/>
</dbReference>
<dbReference type="PANTHER" id="PTHR31637:SF0">
    <property type="entry name" value="2,3-BISPHOSPHOGLYCERATE-INDEPENDENT PHOSPHOGLYCERATE MUTASE"/>
    <property type="match status" value="1"/>
</dbReference>
<dbReference type="Pfam" id="PF06415">
    <property type="entry name" value="iPGM_N"/>
    <property type="match status" value="1"/>
</dbReference>
<dbReference type="Pfam" id="PF01676">
    <property type="entry name" value="Metalloenzyme"/>
    <property type="match status" value="1"/>
</dbReference>
<dbReference type="PIRSF" id="PIRSF001492">
    <property type="entry name" value="IPGAM"/>
    <property type="match status" value="1"/>
</dbReference>
<dbReference type="SUPFAM" id="SSF64158">
    <property type="entry name" value="2,3-Bisphosphoglycerate-independent phosphoglycerate mutase, substrate-binding domain"/>
    <property type="match status" value="1"/>
</dbReference>
<dbReference type="SUPFAM" id="SSF53649">
    <property type="entry name" value="Alkaline phosphatase-like"/>
    <property type="match status" value="1"/>
</dbReference>
<accession>A7ZTG6</accession>
<comment type="function">
    <text evidence="1">Catalyzes the interconversion of 2-phosphoglycerate and 3-phosphoglycerate.</text>
</comment>
<comment type="catalytic activity">
    <reaction evidence="1">
        <text>(2R)-2-phosphoglycerate = (2R)-3-phosphoglycerate</text>
        <dbReference type="Rhea" id="RHEA:15901"/>
        <dbReference type="ChEBI" id="CHEBI:58272"/>
        <dbReference type="ChEBI" id="CHEBI:58289"/>
        <dbReference type="EC" id="5.4.2.12"/>
    </reaction>
</comment>
<comment type="cofactor">
    <cofactor evidence="1">
        <name>Mn(2+)</name>
        <dbReference type="ChEBI" id="CHEBI:29035"/>
    </cofactor>
    <text evidence="1">Binds 2 manganese ions per subunit.</text>
</comment>
<comment type="pathway">
    <text evidence="1">Carbohydrate degradation; glycolysis; pyruvate from D-glyceraldehyde 3-phosphate: step 3/5.</text>
</comment>
<comment type="subunit">
    <text evidence="1">Monomer.</text>
</comment>
<comment type="similarity">
    <text evidence="1">Belongs to the BPG-independent phosphoglycerate mutase family.</text>
</comment>
<name>GPMI_ECO24</name>
<protein>
    <recommendedName>
        <fullName evidence="1">2,3-bisphosphoglycerate-independent phosphoglycerate mutase</fullName>
        <shortName evidence="1">BPG-independent PGAM</shortName>
        <shortName evidence="1">Phosphoglyceromutase</shortName>
        <shortName evidence="1">iPGM</shortName>
        <ecNumber evidence="1">5.4.2.12</ecNumber>
    </recommendedName>
</protein>
<feature type="chain" id="PRO_1000063960" description="2,3-bisphosphoglycerate-independent phosphoglycerate mutase">
    <location>
        <begin position="1"/>
        <end position="514"/>
    </location>
</feature>
<feature type="active site" description="Phosphoserine intermediate" evidence="1">
    <location>
        <position position="64"/>
    </location>
</feature>
<feature type="binding site" evidence="1">
    <location>
        <position position="14"/>
    </location>
    <ligand>
        <name>Mn(2+)</name>
        <dbReference type="ChEBI" id="CHEBI:29035"/>
        <label>2</label>
    </ligand>
</feature>
<feature type="binding site" evidence="1">
    <location>
        <position position="64"/>
    </location>
    <ligand>
        <name>Mn(2+)</name>
        <dbReference type="ChEBI" id="CHEBI:29035"/>
        <label>2</label>
    </ligand>
</feature>
<feature type="binding site" evidence="1">
    <location>
        <position position="125"/>
    </location>
    <ligand>
        <name>substrate</name>
    </ligand>
</feature>
<feature type="binding site" evidence="1">
    <location>
        <begin position="155"/>
        <end position="156"/>
    </location>
    <ligand>
        <name>substrate</name>
    </ligand>
</feature>
<feature type="binding site" evidence="1">
    <location>
        <position position="187"/>
    </location>
    <ligand>
        <name>substrate</name>
    </ligand>
</feature>
<feature type="binding site" evidence="1">
    <location>
        <position position="193"/>
    </location>
    <ligand>
        <name>substrate</name>
    </ligand>
</feature>
<feature type="binding site" evidence="1">
    <location>
        <begin position="263"/>
        <end position="266"/>
    </location>
    <ligand>
        <name>substrate</name>
    </ligand>
</feature>
<feature type="binding site" evidence="1">
    <location>
        <position position="336"/>
    </location>
    <ligand>
        <name>substrate</name>
    </ligand>
</feature>
<feature type="binding site" evidence="1">
    <location>
        <position position="403"/>
    </location>
    <ligand>
        <name>Mn(2+)</name>
        <dbReference type="ChEBI" id="CHEBI:29035"/>
        <label>1</label>
    </ligand>
</feature>
<feature type="binding site" evidence="1">
    <location>
        <position position="407"/>
    </location>
    <ligand>
        <name>Mn(2+)</name>
        <dbReference type="ChEBI" id="CHEBI:29035"/>
        <label>1</label>
    </ligand>
</feature>
<feature type="binding site" evidence="1">
    <location>
        <position position="444"/>
    </location>
    <ligand>
        <name>Mn(2+)</name>
        <dbReference type="ChEBI" id="CHEBI:29035"/>
        <label>2</label>
    </ligand>
</feature>
<feature type="binding site" evidence="1">
    <location>
        <position position="445"/>
    </location>
    <ligand>
        <name>Mn(2+)</name>
        <dbReference type="ChEBI" id="CHEBI:29035"/>
        <label>2</label>
    </ligand>
</feature>
<feature type="binding site" evidence="1">
    <location>
        <position position="463"/>
    </location>
    <ligand>
        <name>Mn(2+)</name>
        <dbReference type="ChEBI" id="CHEBI:29035"/>
        <label>1</label>
    </ligand>
</feature>
<sequence length="514" mass="56110">MSVSKKPMVLVILDGYGYREEQQDNAIFSAKTPVMDALWANRPHTLIDASGLEVGLPDRQMGNSEVGHVNLGAGRIVYQDLTRLDVEIKDRAFFANPVLTGAVDKAKNAGKAVHIMGLLSAGGVHSHEDHIMAMVELAAERGAEKIYLHAFLDGRDTPPRSAESSLKKFEEKFAALGKGRVASIIGRYYAMDRDNRWDRVEKAYDLLTLAQGEFQADTAVAGLQAAYARDENDEFVKATVIRAEGQPDAAMEDGDALIFMNFRADRAREITRAFVNADFDGFARKKVVNVDFVMLTEYAADIKTAVAYPPASLVNTFGEWMAKNDKTQLRISETEKYAHVTFFFNGGVEESFKGEDRILINSPKVATYDLQPEMSSAELTEKLVAAIKSGKYDTIICNYPNGDMVGHTGVMEAAVKAVEALDHCVEEVAKAVESVGGQLLITADHGNAEQMRDPATGQAHTAHTNLPVPLIYVGDKNVKAVAGGKLSDIAPTMLSLMGMEIPQEMTGKPLFIVE</sequence>
<reference key="1">
    <citation type="journal article" date="2008" name="J. Bacteriol.">
        <title>The pangenome structure of Escherichia coli: comparative genomic analysis of E. coli commensal and pathogenic isolates.</title>
        <authorList>
            <person name="Rasko D.A."/>
            <person name="Rosovitz M.J."/>
            <person name="Myers G.S.A."/>
            <person name="Mongodin E.F."/>
            <person name="Fricke W.F."/>
            <person name="Gajer P."/>
            <person name="Crabtree J."/>
            <person name="Sebaihia M."/>
            <person name="Thomson N.R."/>
            <person name="Chaudhuri R."/>
            <person name="Henderson I.R."/>
            <person name="Sperandio V."/>
            <person name="Ravel J."/>
        </authorList>
    </citation>
    <scope>NUCLEOTIDE SEQUENCE [LARGE SCALE GENOMIC DNA]</scope>
    <source>
        <strain>E24377A / ETEC</strain>
    </source>
</reference>
<proteinExistence type="inferred from homology"/>
<organism>
    <name type="scientific">Escherichia coli O139:H28 (strain E24377A / ETEC)</name>
    <dbReference type="NCBI Taxonomy" id="331111"/>
    <lineage>
        <taxon>Bacteria</taxon>
        <taxon>Pseudomonadati</taxon>
        <taxon>Pseudomonadota</taxon>
        <taxon>Gammaproteobacteria</taxon>
        <taxon>Enterobacterales</taxon>
        <taxon>Enterobacteriaceae</taxon>
        <taxon>Escherichia</taxon>
    </lineage>
</organism>